<keyword id="KW-1003">Cell membrane</keyword>
<keyword id="KW-0472">Membrane</keyword>
<keyword id="KW-0812">Transmembrane</keyword>
<keyword id="KW-1133">Transmembrane helix</keyword>
<proteinExistence type="inferred from homology"/>
<comment type="subcellular location">
    <subcellularLocation>
        <location evidence="1">Cell membrane</location>
        <topology evidence="1">Single-pass membrane protein</topology>
    </subcellularLocation>
</comment>
<comment type="similarity">
    <text evidence="1">Belongs to the UPF0154 family.</text>
</comment>
<sequence>MNLGLAIFLIIIALLIGLVGGFYGARAYMKKYFQDNPPISEDMIAAMMAQMGQKPSTKKLNQVMNMMKHQQQK</sequence>
<dbReference type="EMBL" id="CP000413">
    <property type="protein sequence ID" value="ABJ60186.1"/>
    <property type="molecule type" value="Genomic_DNA"/>
</dbReference>
<dbReference type="RefSeq" id="WP_003647496.1">
    <property type="nucleotide sequence ID" value="NZ_WBMG01000005.1"/>
</dbReference>
<dbReference type="SMR" id="Q044D6"/>
<dbReference type="GeneID" id="29639845"/>
<dbReference type="KEGG" id="lga:LGAS_0795"/>
<dbReference type="HOGENOM" id="CLU_180108_0_1_9"/>
<dbReference type="BioCyc" id="LGAS324831:G1G6Y-789-MONOMER"/>
<dbReference type="Proteomes" id="UP000000664">
    <property type="component" value="Chromosome"/>
</dbReference>
<dbReference type="GO" id="GO:0005886">
    <property type="term" value="C:plasma membrane"/>
    <property type="evidence" value="ECO:0007669"/>
    <property type="project" value="UniProtKB-SubCell"/>
</dbReference>
<dbReference type="HAMAP" id="MF_00363">
    <property type="entry name" value="UPF0154"/>
    <property type="match status" value="1"/>
</dbReference>
<dbReference type="InterPro" id="IPR005359">
    <property type="entry name" value="UPF0154"/>
</dbReference>
<dbReference type="Pfam" id="PF03672">
    <property type="entry name" value="UPF0154"/>
    <property type="match status" value="1"/>
</dbReference>
<protein>
    <recommendedName>
        <fullName evidence="1">UPF0154 protein LGAS_0795</fullName>
    </recommendedName>
</protein>
<evidence type="ECO:0000255" key="1">
    <source>
        <dbReference type="HAMAP-Rule" id="MF_00363"/>
    </source>
</evidence>
<organism>
    <name type="scientific">Lactobacillus gasseri (strain ATCC 33323 / DSM 20243 / BCRC 14619 / CIP 102991 / JCM 1131 / KCTC 3163 / NCIMB 11718 / NCTC 13722 / AM63)</name>
    <dbReference type="NCBI Taxonomy" id="324831"/>
    <lineage>
        <taxon>Bacteria</taxon>
        <taxon>Bacillati</taxon>
        <taxon>Bacillota</taxon>
        <taxon>Bacilli</taxon>
        <taxon>Lactobacillales</taxon>
        <taxon>Lactobacillaceae</taxon>
        <taxon>Lactobacillus</taxon>
    </lineage>
</organism>
<reference key="1">
    <citation type="journal article" date="2006" name="Proc. Natl. Acad. Sci. U.S.A.">
        <title>Comparative genomics of the lactic acid bacteria.</title>
        <authorList>
            <person name="Makarova K.S."/>
            <person name="Slesarev A."/>
            <person name="Wolf Y.I."/>
            <person name="Sorokin A."/>
            <person name="Mirkin B."/>
            <person name="Koonin E.V."/>
            <person name="Pavlov A."/>
            <person name="Pavlova N."/>
            <person name="Karamychev V."/>
            <person name="Polouchine N."/>
            <person name="Shakhova V."/>
            <person name="Grigoriev I."/>
            <person name="Lou Y."/>
            <person name="Rohksar D."/>
            <person name="Lucas S."/>
            <person name="Huang K."/>
            <person name="Goodstein D.M."/>
            <person name="Hawkins T."/>
            <person name="Plengvidhya V."/>
            <person name="Welker D."/>
            <person name="Hughes J."/>
            <person name="Goh Y."/>
            <person name="Benson A."/>
            <person name="Baldwin K."/>
            <person name="Lee J.-H."/>
            <person name="Diaz-Muniz I."/>
            <person name="Dosti B."/>
            <person name="Smeianov V."/>
            <person name="Wechter W."/>
            <person name="Barabote R."/>
            <person name="Lorca G."/>
            <person name="Altermann E."/>
            <person name="Barrangou R."/>
            <person name="Ganesan B."/>
            <person name="Xie Y."/>
            <person name="Rawsthorne H."/>
            <person name="Tamir D."/>
            <person name="Parker C."/>
            <person name="Breidt F."/>
            <person name="Broadbent J.R."/>
            <person name="Hutkins R."/>
            <person name="O'Sullivan D."/>
            <person name="Steele J."/>
            <person name="Unlu G."/>
            <person name="Saier M.H. Jr."/>
            <person name="Klaenhammer T."/>
            <person name="Richardson P."/>
            <person name="Kozyavkin S."/>
            <person name="Weimer B.C."/>
            <person name="Mills D.A."/>
        </authorList>
    </citation>
    <scope>NUCLEOTIDE SEQUENCE [LARGE SCALE GENOMIC DNA]</scope>
    <source>
        <strain>ATCC 33323 / DSM 20243 / BCRC 14619 / CIP 102991 / JCM 1131 / KCTC 3163 / NCIMB 11718 / NCTC 13722 / AM63</strain>
    </source>
</reference>
<feature type="chain" id="PRO_1000005628" description="UPF0154 protein LGAS_0795">
    <location>
        <begin position="1"/>
        <end position="73"/>
    </location>
</feature>
<feature type="transmembrane region" description="Helical" evidence="1">
    <location>
        <begin position="3"/>
        <end position="23"/>
    </location>
</feature>
<gene>
    <name type="ordered locus">LGAS_0795</name>
</gene>
<name>Y795_LACGA</name>
<accession>Q044D6</accession>